<keyword id="KW-0028">Amino-acid biosynthesis</keyword>
<keyword id="KW-0057">Aromatic amino acid biosynthesis</keyword>
<keyword id="KW-0067">ATP-binding</keyword>
<keyword id="KW-0963">Cytoplasm</keyword>
<keyword id="KW-0418">Kinase</keyword>
<keyword id="KW-0460">Magnesium</keyword>
<keyword id="KW-0479">Metal-binding</keyword>
<keyword id="KW-0547">Nucleotide-binding</keyword>
<keyword id="KW-1185">Reference proteome</keyword>
<keyword id="KW-0808">Transferase</keyword>
<reference key="1">
    <citation type="journal article" date="2001" name="Proc. Natl. Acad. Sci. U.S.A.">
        <title>Genome sequence of an industrial microorganism Streptomyces avermitilis: deducing the ability of producing secondary metabolites.</title>
        <authorList>
            <person name="Omura S."/>
            <person name="Ikeda H."/>
            <person name="Ishikawa J."/>
            <person name="Hanamoto A."/>
            <person name="Takahashi C."/>
            <person name="Shinose M."/>
            <person name="Takahashi Y."/>
            <person name="Horikawa H."/>
            <person name="Nakazawa H."/>
            <person name="Osonoe T."/>
            <person name="Kikuchi H."/>
            <person name="Shiba T."/>
            <person name="Sakaki Y."/>
            <person name="Hattori M."/>
        </authorList>
    </citation>
    <scope>NUCLEOTIDE SEQUENCE [LARGE SCALE GENOMIC DNA]</scope>
    <source>
        <strain>ATCC 31267 / DSM 46492 / JCM 5070 / NBRC 14893 / NCIMB 12804 / NRRL 8165 / MA-4680</strain>
    </source>
</reference>
<reference key="2">
    <citation type="journal article" date="2003" name="Nat. Biotechnol.">
        <title>Complete genome sequence and comparative analysis of the industrial microorganism Streptomyces avermitilis.</title>
        <authorList>
            <person name="Ikeda H."/>
            <person name="Ishikawa J."/>
            <person name="Hanamoto A."/>
            <person name="Shinose M."/>
            <person name="Kikuchi H."/>
            <person name="Shiba T."/>
            <person name="Sakaki Y."/>
            <person name="Hattori M."/>
            <person name="Omura S."/>
        </authorList>
    </citation>
    <scope>NUCLEOTIDE SEQUENCE [LARGE SCALE GENOMIC DNA]</scope>
    <source>
        <strain>ATCC 31267 / DSM 46492 / JCM 5070 / NBRC 14893 / NCIMB 12804 / NRRL 8165 / MA-4680</strain>
    </source>
</reference>
<dbReference type="EC" id="2.7.1.71" evidence="1"/>
<dbReference type="EMBL" id="BA000030">
    <property type="protein sequence ID" value="BAC74566.1"/>
    <property type="molecule type" value="Genomic_DNA"/>
</dbReference>
<dbReference type="SMR" id="Q827R9"/>
<dbReference type="KEGG" id="sma:SAVERM_6855"/>
<dbReference type="eggNOG" id="COG0703">
    <property type="taxonomic scope" value="Bacteria"/>
</dbReference>
<dbReference type="HOGENOM" id="CLU_057607_3_3_11"/>
<dbReference type="OrthoDB" id="9800332at2"/>
<dbReference type="UniPathway" id="UPA00053">
    <property type="reaction ID" value="UER00088"/>
</dbReference>
<dbReference type="Proteomes" id="UP000000428">
    <property type="component" value="Chromosome"/>
</dbReference>
<dbReference type="GO" id="GO:0005829">
    <property type="term" value="C:cytosol"/>
    <property type="evidence" value="ECO:0007669"/>
    <property type="project" value="TreeGrafter"/>
</dbReference>
<dbReference type="GO" id="GO:0005524">
    <property type="term" value="F:ATP binding"/>
    <property type="evidence" value="ECO:0007669"/>
    <property type="project" value="UniProtKB-UniRule"/>
</dbReference>
<dbReference type="GO" id="GO:0000287">
    <property type="term" value="F:magnesium ion binding"/>
    <property type="evidence" value="ECO:0007669"/>
    <property type="project" value="UniProtKB-UniRule"/>
</dbReference>
<dbReference type="GO" id="GO:0004765">
    <property type="term" value="F:shikimate kinase activity"/>
    <property type="evidence" value="ECO:0007669"/>
    <property type="project" value="UniProtKB-UniRule"/>
</dbReference>
<dbReference type="GO" id="GO:0008652">
    <property type="term" value="P:amino acid biosynthetic process"/>
    <property type="evidence" value="ECO:0007669"/>
    <property type="project" value="UniProtKB-KW"/>
</dbReference>
<dbReference type="GO" id="GO:0009073">
    <property type="term" value="P:aromatic amino acid family biosynthetic process"/>
    <property type="evidence" value="ECO:0007669"/>
    <property type="project" value="UniProtKB-KW"/>
</dbReference>
<dbReference type="GO" id="GO:0009423">
    <property type="term" value="P:chorismate biosynthetic process"/>
    <property type="evidence" value="ECO:0007669"/>
    <property type="project" value="UniProtKB-UniRule"/>
</dbReference>
<dbReference type="CDD" id="cd00464">
    <property type="entry name" value="SK"/>
    <property type="match status" value="1"/>
</dbReference>
<dbReference type="Gene3D" id="3.40.50.300">
    <property type="entry name" value="P-loop containing nucleotide triphosphate hydrolases"/>
    <property type="match status" value="1"/>
</dbReference>
<dbReference type="HAMAP" id="MF_00109">
    <property type="entry name" value="Shikimate_kinase"/>
    <property type="match status" value="1"/>
</dbReference>
<dbReference type="InterPro" id="IPR027417">
    <property type="entry name" value="P-loop_NTPase"/>
</dbReference>
<dbReference type="InterPro" id="IPR031322">
    <property type="entry name" value="Shikimate/glucono_kinase"/>
</dbReference>
<dbReference type="InterPro" id="IPR000623">
    <property type="entry name" value="Shikimate_kinase/TSH1"/>
</dbReference>
<dbReference type="InterPro" id="IPR023000">
    <property type="entry name" value="Shikimate_kinase_CS"/>
</dbReference>
<dbReference type="PANTHER" id="PTHR21087">
    <property type="entry name" value="SHIKIMATE KINASE"/>
    <property type="match status" value="1"/>
</dbReference>
<dbReference type="PANTHER" id="PTHR21087:SF16">
    <property type="entry name" value="SHIKIMATE KINASE 1, CHLOROPLASTIC"/>
    <property type="match status" value="1"/>
</dbReference>
<dbReference type="Pfam" id="PF01202">
    <property type="entry name" value="SKI"/>
    <property type="match status" value="1"/>
</dbReference>
<dbReference type="PRINTS" id="PR01100">
    <property type="entry name" value="SHIKIMTKNASE"/>
</dbReference>
<dbReference type="SUPFAM" id="SSF52540">
    <property type="entry name" value="P-loop containing nucleoside triphosphate hydrolases"/>
    <property type="match status" value="1"/>
</dbReference>
<dbReference type="PROSITE" id="PS01128">
    <property type="entry name" value="SHIKIMATE_KINASE"/>
    <property type="match status" value="1"/>
</dbReference>
<sequence length="171" mass="18390">MTVPRVVLVGPMGVGKSTVGALVAERLGCAYRDTDDDIVTAEGRTIADIFVDEGEPVFRAIEKRAVHTALAEHDGVLALGGGAILDADTRALLAGHRVVYLSMEVDEAVKRTGLNAARPLLAVNPRRQWRELMEARRHLYTEVARAVVATDGRGPEEVAQAVLDALELKEA</sequence>
<comment type="function">
    <text evidence="1">Catalyzes the specific phosphorylation of the 3-hydroxyl group of shikimic acid using ATP as a cosubstrate.</text>
</comment>
<comment type="catalytic activity">
    <reaction evidence="1">
        <text>shikimate + ATP = 3-phosphoshikimate + ADP + H(+)</text>
        <dbReference type="Rhea" id="RHEA:13121"/>
        <dbReference type="ChEBI" id="CHEBI:15378"/>
        <dbReference type="ChEBI" id="CHEBI:30616"/>
        <dbReference type="ChEBI" id="CHEBI:36208"/>
        <dbReference type="ChEBI" id="CHEBI:145989"/>
        <dbReference type="ChEBI" id="CHEBI:456216"/>
        <dbReference type="EC" id="2.7.1.71"/>
    </reaction>
</comment>
<comment type="cofactor">
    <cofactor evidence="1">
        <name>Mg(2+)</name>
        <dbReference type="ChEBI" id="CHEBI:18420"/>
    </cofactor>
    <text evidence="1">Binds 1 Mg(2+) ion per subunit.</text>
</comment>
<comment type="pathway">
    <text evidence="1">Metabolic intermediate biosynthesis; chorismate biosynthesis; chorismate from D-erythrose 4-phosphate and phosphoenolpyruvate: step 5/7.</text>
</comment>
<comment type="subunit">
    <text evidence="1">Monomer.</text>
</comment>
<comment type="subcellular location">
    <subcellularLocation>
        <location evidence="1">Cytoplasm</location>
    </subcellularLocation>
</comment>
<comment type="similarity">
    <text evidence="1">Belongs to the shikimate kinase family.</text>
</comment>
<name>AROK_STRAW</name>
<protein>
    <recommendedName>
        <fullName evidence="1">Shikimate kinase</fullName>
        <shortName evidence="1">SK</shortName>
        <ecNumber evidence="1">2.7.1.71</ecNumber>
    </recommendedName>
</protein>
<organism>
    <name type="scientific">Streptomyces avermitilis (strain ATCC 31267 / DSM 46492 / JCM 5070 / NBRC 14893 / NCIMB 12804 / NRRL 8165 / MA-4680)</name>
    <dbReference type="NCBI Taxonomy" id="227882"/>
    <lineage>
        <taxon>Bacteria</taxon>
        <taxon>Bacillati</taxon>
        <taxon>Actinomycetota</taxon>
        <taxon>Actinomycetes</taxon>
        <taxon>Kitasatosporales</taxon>
        <taxon>Streptomycetaceae</taxon>
        <taxon>Streptomyces</taxon>
    </lineage>
</organism>
<accession>Q827R9</accession>
<gene>
    <name evidence="1" type="primary">aroK</name>
    <name type="ordered locus">SAV_6855</name>
</gene>
<feature type="chain" id="PRO_0000237939" description="Shikimate kinase">
    <location>
        <begin position="1"/>
        <end position="171"/>
    </location>
</feature>
<feature type="binding site" evidence="1">
    <location>
        <begin position="13"/>
        <end position="18"/>
    </location>
    <ligand>
        <name>ATP</name>
        <dbReference type="ChEBI" id="CHEBI:30616"/>
    </ligand>
</feature>
<feature type="binding site" evidence="1">
    <location>
        <position position="17"/>
    </location>
    <ligand>
        <name>Mg(2+)</name>
        <dbReference type="ChEBI" id="CHEBI:18420"/>
    </ligand>
</feature>
<feature type="binding site" evidence="1">
    <location>
        <position position="35"/>
    </location>
    <ligand>
        <name>substrate</name>
    </ligand>
</feature>
<feature type="binding site" evidence="1">
    <location>
        <position position="59"/>
    </location>
    <ligand>
        <name>substrate</name>
    </ligand>
</feature>
<feature type="binding site" evidence="1">
    <location>
        <position position="81"/>
    </location>
    <ligand>
        <name>substrate</name>
    </ligand>
</feature>
<feature type="binding site" evidence="1">
    <location>
        <position position="118"/>
    </location>
    <ligand>
        <name>ATP</name>
        <dbReference type="ChEBI" id="CHEBI:30616"/>
    </ligand>
</feature>
<feature type="binding site" evidence="1">
    <location>
        <position position="136"/>
    </location>
    <ligand>
        <name>substrate</name>
    </ligand>
</feature>
<feature type="binding site" evidence="1">
    <location>
        <position position="153"/>
    </location>
    <ligand>
        <name>ATP</name>
        <dbReference type="ChEBI" id="CHEBI:30616"/>
    </ligand>
</feature>
<proteinExistence type="inferred from homology"/>
<evidence type="ECO:0000255" key="1">
    <source>
        <dbReference type="HAMAP-Rule" id="MF_00109"/>
    </source>
</evidence>